<reference key="1">
    <citation type="submission" date="2007-05" db="EMBL/GenBank/DDBJ databases">
        <title>Complete sequence of Pseudomonas putida F1.</title>
        <authorList>
            <consortium name="US DOE Joint Genome Institute"/>
            <person name="Copeland A."/>
            <person name="Lucas S."/>
            <person name="Lapidus A."/>
            <person name="Barry K."/>
            <person name="Detter J.C."/>
            <person name="Glavina del Rio T."/>
            <person name="Hammon N."/>
            <person name="Israni S."/>
            <person name="Dalin E."/>
            <person name="Tice H."/>
            <person name="Pitluck S."/>
            <person name="Chain P."/>
            <person name="Malfatti S."/>
            <person name="Shin M."/>
            <person name="Vergez L."/>
            <person name="Schmutz J."/>
            <person name="Larimer F."/>
            <person name="Land M."/>
            <person name="Hauser L."/>
            <person name="Kyrpides N."/>
            <person name="Lykidis A."/>
            <person name="Parales R."/>
            <person name="Richardson P."/>
        </authorList>
    </citation>
    <scope>NUCLEOTIDE SEQUENCE [LARGE SCALE GENOMIC DNA]</scope>
    <source>
        <strain>ATCC 700007 / DSM 6899 / JCM 31910 / BCRC 17059 / LMG 24140 / F1</strain>
    </source>
</reference>
<evidence type="ECO:0000255" key="1">
    <source>
        <dbReference type="HAMAP-Rule" id="MF_00333"/>
    </source>
</evidence>
<proteinExistence type="inferred from homology"/>
<gene>
    <name evidence="1" type="primary">hemF</name>
    <name type="ordered locus">Pput_0089</name>
</gene>
<dbReference type="EC" id="1.3.3.3" evidence="1"/>
<dbReference type="EMBL" id="CP000712">
    <property type="protein sequence ID" value="ABQ76264.1"/>
    <property type="molecule type" value="Genomic_DNA"/>
</dbReference>
<dbReference type="SMR" id="A5VWK4"/>
<dbReference type="KEGG" id="ppf:Pput_0089"/>
<dbReference type="eggNOG" id="COG0408">
    <property type="taxonomic scope" value="Bacteria"/>
</dbReference>
<dbReference type="HOGENOM" id="CLU_026169_0_1_6"/>
<dbReference type="UniPathway" id="UPA00251">
    <property type="reaction ID" value="UER00322"/>
</dbReference>
<dbReference type="GO" id="GO:0005737">
    <property type="term" value="C:cytoplasm"/>
    <property type="evidence" value="ECO:0007669"/>
    <property type="project" value="UniProtKB-SubCell"/>
</dbReference>
<dbReference type="GO" id="GO:0004109">
    <property type="term" value="F:coproporphyrinogen oxidase activity"/>
    <property type="evidence" value="ECO:0007669"/>
    <property type="project" value="UniProtKB-UniRule"/>
</dbReference>
<dbReference type="GO" id="GO:0046872">
    <property type="term" value="F:metal ion binding"/>
    <property type="evidence" value="ECO:0007669"/>
    <property type="project" value="UniProtKB-KW"/>
</dbReference>
<dbReference type="GO" id="GO:0042803">
    <property type="term" value="F:protein homodimerization activity"/>
    <property type="evidence" value="ECO:0000250"/>
    <property type="project" value="UniProtKB"/>
</dbReference>
<dbReference type="GO" id="GO:0006782">
    <property type="term" value="P:protoporphyrinogen IX biosynthetic process"/>
    <property type="evidence" value="ECO:0007669"/>
    <property type="project" value="UniProtKB-UniRule"/>
</dbReference>
<dbReference type="FunFam" id="3.40.1500.10:FF:000001">
    <property type="entry name" value="Oxygen-dependent coproporphyrinogen-III oxidase"/>
    <property type="match status" value="1"/>
</dbReference>
<dbReference type="Gene3D" id="3.40.1500.10">
    <property type="entry name" value="Coproporphyrinogen III oxidase, aerobic"/>
    <property type="match status" value="1"/>
</dbReference>
<dbReference type="HAMAP" id="MF_00333">
    <property type="entry name" value="Coprogen_oxidas"/>
    <property type="match status" value="1"/>
</dbReference>
<dbReference type="InterPro" id="IPR001260">
    <property type="entry name" value="Coprogen_oxidase_aer"/>
</dbReference>
<dbReference type="InterPro" id="IPR036406">
    <property type="entry name" value="Coprogen_oxidase_aer_sf"/>
</dbReference>
<dbReference type="InterPro" id="IPR018375">
    <property type="entry name" value="Coprogen_oxidase_CS"/>
</dbReference>
<dbReference type="NCBIfam" id="NF003727">
    <property type="entry name" value="PRK05330.1"/>
    <property type="match status" value="1"/>
</dbReference>
<dbReference type="PANTHER" id="PTHR10755">
    <property type="entry name" value="COPROPORPHYRINOGEN III OXIDASE, MITOCHONDRIAL"/>
    <property type="match status" value="1"/>
</dbReference>
<dbReference type="PANTHER" id="PTHR10755:SF0">
    <property type="entry name" value="OXYGEN-DEPENDENT COPROPORPHYRINOGEN-III OXIDASE, MITOCHONDRIAL"/>
    <property type="match status" value="1"/>
</dbReference>
<dbReference type="Pfam" id="PF01218">
    <property type="entry name" value="Coprogen_oxidas"/>
    <property type="match status" value="1"/>
</dbReference>
<dbReference type="PIRSF" id="PIRSF000166">
    <property type="entry name" value="Coproporphyri_ox"/>
    <property type="match status" value="1"/>
</dbReference>
<dbReference type="PRINTS" id="PR00073">
    <property type="entry name" value="COPRGNOXDASE"/>
</dbReference>
<dbReference type="SUPFAM" id="SSF102886">
    <property type="entry name" value="Coproporphyrinogen III oxidase"/>
    <property type="match status" value="1"/>
</dbReference>
<dbReference type="PROSITE" id="PS01021">
    <property type="entry name" value="COPROGEN_OXIDASE"/>
    <property type="match status" value="1"/>
</dbReference>
<comment type="function">
    <text evidence="1">Involved in the heme biosynthesis. Catalyzes the aerobic oxidative decarboxylation of propionate groups of rings A and B of coproporphyrinogen-III to yield the vinyl groups in protoporphyrinogen-IX.</text>
</comment>
<comment type="catalytic activity">
    <reaction evidence="1">
        <text>coproporphyrinogen III + O2 + 2 H(+) = protoporphyrinogen IX + 2 CO2 + 2 H2O</text>
        <dbReference type="Rhea" id="RHEA:18257"/>
        <dbReference type="ChEBI" id="CHEBI:15377"/>
        <dbReference type="ChEBI" id="CHEBI:15378"/>
        <dbReference type="ChEBI" id="CHEBI:15379"/>
        <dbReference type="ChEBI" id="CHEBI:16526"/>
        <dbReference type="ChEBI" id="CHEBI:57307"/>
        <dbReference type="ChEBI" id="CHEBI:57309"/>
        <dbReference type="EC" id="1.3.3.3"/>
    </reaction>
</comment>
<comment type="cofactor">
    <cofactor evidence="1">
        <name>a divalent metal cation</name>
        <dbReference type="ChEBI" id="CHEBI:60240"/>
    </cofactor>
</comment>
<comment type="pathway">
    <text evidence="1">Porphyrin-containing compound metabolism; protoporphyrin-IX biosynthesis; protoporphyrinogen-IX from coproporphyrinogen-III (O2 route): step 1/1.</text>
</comment>
<comment type="subunit">
    <text evidence="1">Homodimer.</text>
</comment>
<comment type="subcellular location">
    <subcellularLocation>
        <location evidence="1">Cytoplasm</location>
    </subcellularLocation>
</comment>
<comment type="similarity">
    <text evidence="1">Belongs to the aerobic coproporphyrinogen-III oxidase family.</text>
</comment>
<feature type="chain" id="PRO_1000019488" description="Oxygen-dependent coproporphyrinogen-III oxidase">
    <location>
        <begin position="1"/>
        <end position="303"/>
    </location>
</feature>
<feature type="region of interest" description="Important for dimerization" evidence="1">
    <location>
        <begin position="241"/>
        <end position="276"/>
    </location>
</feature>
<feature type="active site" description="Proton donor" evidence="1">
    <location>
        <position position="107"/>
    </location>
</feature>
<feature type="binding site" evidence="1">
    <location>
        <position position="93"/>
    </location>
    <ligand>
        <name>substrate</name>
    </ligand>
</feature>
<feature type="binding site" evidence="1">
    <location>
        <position position="97"/>
    </location>
    <ligand>
        <name>a divalent metal cation</name>
        <dbReference type="ChEBI" id="CHEBI:60240"/>
    </ligand>
</feature>
<feature type="binding site" evidence="1">
    <location>
        <position position="107"/>
    </location>
    <ligand>
        <name>a divalent metal cation</name>
        <dbReference type="ChEBI" id="CHEBI:60240"/>
    </ligand>
</feature>
<feature type="binding site" evidence="1">
    <location>
        <begin position="109"/>
        <end position="111"/>
    </location>
    <ligand>
        <name>substrate</name>
    </ligand>
</feature>
<feature type="binding site" evidence="1">
    <location>
        <position position="146"/>
    </location>
    <ligand>
        <name>a divalent metal cation</name>
        <dbReference type="ChEBI" id="CHEBI:60240"/>
    </ligand>
</feature>
<feature type="binding site" evidence="1">
    <location>
        <position position="176"/>
    </location>
    <ligand>
        <name>a divalent metal cation</name>
        <dbReference type="ChEBI" id="CHEBI:60240"/>
    </ligand>
</feature>
<feature type="binding site" evidence="1">
    <location>
        <begin position="259"/>
        <end position="261"/>
    </location>
    <ligand>
        <name>substrate</name>
    </ligand>
</feature>
<feature type="site" description="Important for dimerization" evidence="1">
    <location>
        <position position="176"/>
    </location>
</feature>
<sequence length="303" mass="34419">MTSRTEAVKAYLLDLQDRICSALETEDGGARFVEDAWVREAGGGGRTRVIGDGKVIEKGGVNFSHVFGAGLPPSASAHRPELAGRGFEALGVSLVIHPYNPHVPTSHANVRFFIAEKEGEEAVWWFGGGFDLTPYYGNEEDCVHWHRVAEQACAPFGADVYPRYKAWCDRYFHLKHRGEPRGIGGLFFDDLNEWDFDTCFAFIRAIGDAYINAYLPIVQRRKDTPYTPQQREFQEYRRGRYVEFNLVYDRGTLFGLQSGGRTESILMSLPPQVRWGYDWKAAPGSEEARLTEYFLQDRDWLGQ</sequence>
<organism>
    <name type="scientific">Pseudomonas putida (strain ATCC 700007 / DSM 6899 / JCM 31910 / BCRC 17059 / LMG 24140 / F1)</name>
    <dbReference type="NCBI Taxonomy" id="351746"/>
    <lineage>
        <taxon>Bacteria</taxon>
        <taxon>Pseudomonadati</taxon>
        <taxon>Pseudomonadota</taxon>
        <taxon>Gammaproteobacteria</taxon>
        <taxon>Pseudomonadales</taxon>
        <taxon>Pseudomonadaceae</taxon>
        <taxon>Pseudomonas</taxon>
    </lineage>
</organism>
<keyword id="KW-0963">Cytoplasm</keyword>
<keyword id="KW-0350">Heme biosynthesis</keyword>
<keyword id="KW-0479">Metal-binding</keyword>
<keyword id="KW-0560">Oxidoreductase</keyword>
<keyword id="KW-0627">Porphyrin biosynthesis</keyword>
<protein>
    <recommendedName>
        <fullName evidence="1">Oxygen-dependent coproporphyrinogen-III oxidase</fullName>
        <shortName evidence="1">CPO</shortName>
        <shortName evidence="1">Coprogen oxidase</shortName>
        <shortName evidence="1">Coproporphyrinogenase</shortName>
        <ecNumber evidence="1">1.3.3.3</ecNumber>
    </recommendedName>
</protein>
<name>HEM6_PSEP1</name>
<accession>A5VWK4</accession>